<comment type="function">
    <text evidence="1">Catalyzes the condensation of pantoate with beta-alanine in an ATP-dependent reaction via a pantoyl-adenylate intermediate.</text>
</comment>
<comment type="catalytic activity">
    <reaction evidence="1">
        <text>(R)-pantoate + beta-alanine + ATP = (R)-pantothenate + AMP + diphosphate + H(+)</text>
        <dbReference type="Rhea" id="RHEA:10912"/>
        <dbReference type="ChEBI" id="CHEBI:15378"/>
        <dbReference type="ChEBI" id="CHEBI:15980"/>
        <dbReference type="ChEBI" id="CHEBI:29032"/>
        <dbReference type="ChEBI" id="CHEBI:30616"/>
        <dbReference type="ChEBI" id="CHEBI:33019"/>
        <dbReference type="ChEBI" id="CHEBI:57966"/>
        <dbReference type="ChEBI" id="CHEBI:456215"/>
        <dbReference type="EC" id="6.3.2.1"/>
    </reaction>
</comment>
<comment type="pathway">
    <text evidence="1">Cofactor biosynthesis; (R)-pantothenate biosynthesis; (R)-pantothenate from (R)-pantoate and beta-alanine: step 1/1.</text>
</comment>
<comment type="subunit">
    <text evidence="1">Homodimer.</text>
</comment>
<comment type="subcellular location">
    <subcellularLocation>
        <location evidence="1">Cytoplasm</location>
    </subcellularLocation>
</comment>
<comment type="miscellaneous">
    <text evidence="1">The reaction proceeds by a bi uni uni bi ping pong mechanism.</text>
</comment>
<comment type="similarity">
    <text evidence="1">Belongs to the pantothenate synthetase family.</text>
</comment>
<accession>B2I721</accession>
<gene>
    <name evidence="1" type="primary">panC</name>
    <name type="ordered locus">XfasM23_0174</name>
</gene>
<dbReference type="EC" id="6.3.2.1" evidence="1"/>
<dbReference type="EMBL" id="CP001011">
    <property type="protein sequence ID" value="ACB91631.1"/>
    <property type="molecule type" value="Genomic_DNA"/>
</dbReference>
<dbReference type="RefSeq" id="WP_011097534.1">
    <property type="nucleotide sequence ID" value="NC_010577.1"/>
</dbReference>
<dbReference type="SMR" id="B2I721"/>
<dbReference type="GeneID" id="93903879"/>
<dbReference type="KEGG" id="xfn:XfasM23_0174"/>
<dbReference type="HOGENOM" id="CLU_047148_0_0_6"/>
<dbReference type="UniPathway" id="UPA00028">
    <property type="reaction ID" value="UER00005"/>
</dbReference>
<dbReference type="Proteomes" id="UP000001698">
    <property type="component" value="Chromosome"/>
</dbReference>
<dbReference type="GO" id="GO:0005829">
    <property type="term" value="C:cytosol"/>
    <property type="evidence" value="ECO:0007669"/>
    <property type="project" value="TreeGrafter"/>
</dbReference>
<dbReference type="GO" id="GO:0005524">
    <property type="term" value="F:ATP binding"/>
    <property type="evidence" value="ECO:0007669"/>
    <property type="project" value="UniProtKB-KW"/>
</dbReference>
<dbReference type="GO" id="GO:0004592">
    <property type="term" value="F:pantoate-beta-alanine ligase activity"/>
    <property type="evidence" value="ECO:0007669"/>
    <property type="project" value="UniProtKB-UniRule"/>
</dbReference>
<dbReference type="GO" id="GO:0015940">
    <property type="term" value="P:pantothenate biosynthetic process"/>
    <property type="evidence" value="ECO:0007669"/>
    <property type="project" value="UniProtKB-UniRule"/>
</dbReference>
<dbReference type="CDD" id="cd00560">
    <property type="entry name" value="PanC"/>
    <property type="match status" value="1"/>
</dbReference>
<dbReference type="FunFam" id="3.40.50.620:FF:000114">
    <property type="entry name" value="Pantothenate synthetase"/>
    <property type="match status" value="1"/>
</dbReference>
<dbReference type="Gene3D" id="3.40.50.620">
    <property type="entry name" value="HUPs"/>
    <property type="match status" value="1"/>
</dbReference>
<dbReference type="Gene3D" id="3.30.1300.10">
    <property type="entry name" value="Pantoate-beta-alanine ligase, C-terminal domain"/>
    <property type="match status" value="1"/>
</dbReference>
<dbReference type="HAMAP" id="MF_00158">
    <property type="entry name" value="PanC"/>
    <property type="match status" value="1"/>
</dbReference>
<dbReference type="InterPro" id="IPR003721">
    <property type="entry name" value="Pantoate_ligase"/>
</dbReference>
<dbReference type="InterPro" id="IPR042176">
    <property type="entry name" value="Pantoate_ligase_C"/>
</dbReference>
<dbReference type="InterPro" id="IPR014729">
    <property type="entry name" value="Rossmann-like_a/b/a_fold"/>
</dbReference>
<dbReference type="NCBIfam" id="TIGR00018">
    <property type="entry name" value="panC"/>
    <property type="match status" value="1"/>
</dbReference>
<dbReference type="PANTHER" id="PTHR21299">
    <property type="entry name" value="CYTIDYLATE KINASE/PANTOATE-BETA-ALANINE LIGASE"/>
    <property type="match status" value="1"/>
</dbReference>
<dbReference type="PANTHER" id="PTHR21299:SF1">
    <property type="entry name" value="PANTOATE--BETA-ALANINE LIGASE"/>
    <property type="match status" value="1"/>
</dbReference>
<dbReference type="Pfam" id="PF02569">
    <property type="entry name" value="Pantoate_ligase"/>
    <property type="match status" value="1"/>
</dbReference>
<dbReference type="SUPFAM" id="SSF52374">
    <property type="entry name" value="Nucleotidylyl transferase"/>
    <property type="match status" value="1"/>
</dbReference>
<name>PANC_XYLF2</name>
<organism>
    <name type="scientific">Xylella fastidiosa (strain M23)</name>
    <dbReference type="NCBI Taxonomy" id="405441"/>
    <lineage>
        <taxon>Bacteria</taxon>
        <taxon>Pseudomonadati</taxon>
        <taxon>Pseudomonadota</taxon>
        <taxon>Gammaproteobacteria</taxon>
        <taxon>Lysobacterales</taxon>
        <taxon>Lysobacteraceae</taxon>
        <taxon>Xylella</taxon>
    </lineage>
</organism>
<reference key="1">
    <citation type="journal article" date="2010" name="J. Bacteriol.">
        <title>Whole genome sequences of two Xylella fastidiosa strains (M12 and M23) causing almond leaf scorch disease in California.</title>
        <authorList>
            <person name="Chen J."/>
            <person name="Xie G."/>
            <person name="Han S."/>
            <person name="Chertkov O."/>
            <person name="Sims D."/>
            <person name="Civerolo E.L."/>
        </authorList>
    </citation>
    <scope>NUCLEOTIDE SEQUENCE [LARGE SCALE GENOMIC DNA]</scope>
    <source>
        <strain>M23</strain>
    </source>
</reference>
<sequence length="281" mass="31267">MIDTVTDLSRLRGIVADWRRQGLRVALVPTMGNLHAGHFSLVMLARHYADRVVSSVFVNPTQFGPHEDFQRYPRTPEADMRGLEHVGCDVLWLPSVETMYPLGTERTVRLFIPCVSDVLEGTFRPGHFEGVCTVVARLFNQVLPDVAVFGKKDYQQLVVIRQMVVDLAFPIEILGGCIVRESDGLAMSSRNQYLSMQQRPQAAEIHRTLIAMRDAVMSGGVHADVEAEAVRRLEAAGFQVDYAVIRLPDLCEPIDGIVISQGIALVAARLGNTRLIDNLEF</sequence>
<protein>
    <recommendedName>
        <fullName evidence="1">Pantothenate synthetase</fullName>
        <shortName evidence="1">PS</shortName>
        <ecNumber evidence="1">6.3.2.1</ecNumber>
    </recommendedName>
    <alternativeName>
        <fullName evidence="1">Pantoate--beta-alanine ligase</fullName>
    </alternativeName>
    <alternativeName>
        <fullName evidence="1">Pantoate-activating enzyme</fullName>
    </alternativeName>
</protein>
<proteinExistence type="inferred from homology"/>
<keyword id="KW-0067">ATP-binding</keyword>
<keyword id="KW-0963">Cytoplasm</keyword>
<keyword id="KW-0436">Ligase</keyword>
<keyword id="KW-0547">Nucleotide-binding</keyword>
<keyword id="KW-0566">Pantothenate biosynthesis</keyword>
<evidence type="ECO:0000255" key="1">
    <source>
        <dbReference type="HAMAP-Rule" id="MF_00158"/>
    </source>
</evidence>
<feature type="chain" id="PRO_1000097130" description="Pantothenate synthetase">
    <location>
        <begin position="1"/>
        <end position="281"/>
    </location>
</feature>
<feature type="active site" description="Proton donor" evidence="1">
    <location>
        <position position="38"/>
    </location>
</feature>
<feature type="binding site" evidence="1">
    <location>
        <begin position="31"/>
        <end position="38"/>
    </location>
    <ligand>
        <name>ATP</name>
        <dbReference type="ChEBI" id="CHEBI:30616"/>
    </ligand>
</feature>
<feature type="binding site" evidence="1">
    <location>
        <position position="62"/>
    </location>
    <ligand>
        <name>(R)-pantoate</name>
        <dbReference type="ChEBI" id="CHEBI:15980"/>
    </ligand>
</feature>
<feature type="binding site" evidence="1">
    <location>
        <position position="62"/>
    </location>
    <ligand>
        <name>beta-alanine</name>
        <dbReference type="ChEBI" id="CHEBI:57966"/>
    </ligand>
</feature>
<feature type="binding site" evidence="1">
    <location>
        <begin position="150"/>
        <end position="153"/>
    </location>
    <ligand>
        <name>ATP</name>
        <dbReference type="ChEBI" id="CHEBI:30616"/>
    </ligand>
</feature>
<feature type="binding site" evidence="1">
    <location>
        <position position="156"/>
    </location>
    <ligand>
        <name>(R)-pantoate</name>
        <dbReference type="ChEBI" id="CHEBI:15980"/>
    </ligand>
</feature>
<feature type="binding site" evidence="1">
    <location>
        <position position="179"/>
    </location>
    <ligand>
        <name>ATP</name>
        <dbReference type="ChEBI" id="CHEBI:30616"/>
    </ligand>
</feature>
<feature type="binding site" evidence="1">
    <location>
        <begin position="187"/>
        <end position="190"/>
    </location>
    <ligand>
        <name>ATP</name>
        <dbReference type="ChEBI" id="CHEBI:30616"/>
    </ligand>
</feature>